<reference key="1">
    <citation type="journal article" date="2005" name="J. Bacteriol.">
        <title>Completion of the genome sequence of Brucella abortus and comparison to the highly similar genomes of Brucella melitensis and Brucella suis.</title>
        <authorList>
            <person name="Halling S.M."/>
            <person name="Peterson-Burch B.D."/>
            <person name="Bricker B.J."/>
            <person name="Zuerner R.L."/>
            <person name="Qing Z."/>
            <person name="Li L.-L."/>
            <person name="Kapur V."/>
            <person name="Alt D.P."/>
            <person name="Olsen S.C."/>
        </authorList>
    </citation>
    <scope>NUCLEOTIDE SEQUENCE [LARGE SCALE GENOMIC DNA]</scope>
    <source>
        <strain>9-941</strain>
    </source>
</reference>
<gene>
    <name evidence="1" type="primary">ttcA</name>
    <name type="ordered locus">BruAb1_0844</name>
</gene>
<dbReference type="EC" id="2.8.1.-" evidence="1"/>
<dbReference type="EMBL" id="AE017223">
    <property type="protein sequence ID" value="AAX74210.1"/>
    <property type="molecule type" value="Genomic_DNA"/>
</dbReference>
<dbReference type="RefSeq" id="WP_002969416.1">
    <property type="nucleotide sequence ID" value="NC_006932.1"/>
</dbReference>
<dbReference type="SMR" id="Q57DS4"/>
<dbReference type="EnsemblBacteria" id="AAX74210">
    <property type="protein sequence ID" value="AAX74210"/>
    <property type="gene ID" value="BruAb1_0844"/>
</dbReference>
<dbReference type="GeneID" id="93016786"/>
<dbReference type="KEGG" id="bmb:BruAb1_0844"/>
<dbReference type="HOGENOM" id="CLU_026481_0_0_5"/>
<dbReference type="Proteomes" id="UP000000540">
    <property type="component" value="Chromosome I"/>
</dbReference>
<dbReference type="GO" id="GO:0005737">
    <property type="term" value="C:cytoplasm"/>
    <property type="evidence" value="ECO:0007669"/>
    <property type="project" value="UniProtKB-SubCell"/>
</dbReference>
<dbReference type="GO" id="GO:0051539">
    <property type="term" value="F:4 iron, 4 sulfur cluster binding"/>
    <property type="evidence" value="ECO:0007669"/>
    <property type="project" value="UniProtKB-UniRule"/>
</dbReference>
<dbReference type="GO" id="GO:0005524">
    <property type="term" value="F:ATP binding"/>
    <property type="evidence" value="ECO:0007669"/>
    <property type="project" value="UniProtKB-UniRule"/>
</dbReference>
<dbReference type="GO" id="GO:0000287">
    <property type="term" value="F:magnesium ion binding"/>
    <property type="evidence" value="ECO:0007669"/>
    <property type="project" value="UniProtKB-UniRule"/>
</dbReference>
<dbReference type="GO" id="GO:0016783">
    <property type="term" value="F:sulfurtransferase activity"/>
    <property type="evidence" value="ECO:0007669"/>
    <property type="project" value="UniProtKB-UniRule"/>
</dbReference>
<dbReference type="GO" id="GO:0000049">
    <property type="term" value="F:tRNA binding"/>
    <property type="evidence" value="ECO:0007669"/>
    <property type="project" value="UniProtKB-KW"/>
</dbReference>
<dbReference type="GO" id="GO:0034227">
    <property type="term" value="P:tRNA thio-modification"/>
    <property type="evidence" value="ECO:0007669"/>
    <property type="project" value="UniProtKB-UniRule"/>
</dbReference>
<dbReference type="CDD" id="cd24138">
    <property type="entry name" value="TtcA-like"/>
    <property type="match status" value="1"/>
</dbReference>
<dbReference type="Gene3D" id="3.40.50.620">
    <property type="entry name" value="HUPs"/>
    <property type="match status" value="1"/>
</dbReference>
<dbReference type="HAMAP" id="MF_01850">
    <property type="entry name" value="TtcA"/>
    <property type="match status" value="1"/>
</dbReference>
<dbReference type="InterPro" id="IPR014729">
    <property type="entry name" value="Rossmann-like_a/b/a_fold"/>
</dbReference>
<dbReference type="InterPro" id="IPR011063">
    <property type="entry name" value="TilS/TtcA_N"/>
</dbReference>
<dbReference type="InterPro" id="IPR012089">
    <property type="entry name" value="tRNA_Cyd_32_2_STrfase"/>
</dbReference>
<dbReference type="InterPro" id="IPR035107">
    <property type="entry name" value="tRNA_thiolation_TtcA_Ctu1"/>
</dbReference>
<dbReference type="NCBIfam" id="NF007972">
    <property type="entry name" value="PRK10696.1"/>
    <property type="match status" value="1"/>
</dbReference>
<dbReference type="PANTHER" id="PTHR43686:SF1">
    <property type="entry name" value="AMINOTRAN_5 DOMAIN-CONTAINING PROTEIN"/>
    <property type="match status" value="1"/>
</dbReference>
<dbReference type="PANTHER" id="PTHR43686">
    <property type="entry name" value="SULFURTRANSFERASE-RELATED"/>
    <property type="match status" value="1"/>
</dbReference>
<dbReference type="Pfam" id="PF01171">
    <property type="entry name" value="ATP_bind_3"/>
    <property type="match status" value="1"/>
</dbReference>
<dbReference type="PIRSF" id="PIRSF004976">
    <property type="entry name" value="ATPase_YdaO"/>
    <property type="match status" value="1"/>
</dbReference>
<dbReference type="SUPFAM" id="SSF52402">
    <property type="entry name" value="Adenine nucleotide alpha hydrolases-like"/>
    <property type="match status" value="1"/>
</dbReference>
<feature type="chain" id="PRO_0000348672" description="tRNA-cytidine(32) 2-sulfurtransferase">
    <location>
        <begin position="1"/>
        <end position="293"/>
    </location>
</feature>
<feature type="short sequence motif" description="PP-loop motif" evidence="1">
    <location>
        <begin position="62"/>
        <end position="67"/>
    </location>
</feature>
<feature type="binding site" evidence="1">
    <location>
        <position position="137"/>
    </location>
    <ligand>
        <name>[4Fe-4S] cluster</name>
        <dbReference type="ChEBI" id="CHEBI:49883"/>
    </ligand>
</feature>
<feature type="binding site" evidence="1">
    <location>
        <position position="140"/>
    </location>
    <ligand>
        <name>[4Fe-4S] cluster</name>
        <dbReference type="ChEBI" id="CHEBI:49883"/>
    </ligand>
</feature>
<feature type="binding site" evidence="1">
    <location>
        <position position="228"/>
    </location>
    <ligand>
        <name>[4Fe-4S] cluster</name>
        <dbReference type="ChEBI" id="CHEBI:49883"/>
    </ligand>
</feature>
<evidence type="ECO:0000255" key="1">
    <source>
        <dbReference type="HAMAP-Rule" id="MF_01850"/>
    </source>
</evidence>
<keyword id="KW-0004">4Fe-4S</keyword>
<keyword id="KW-0067">ATP-binding</keyword>
<keyword id="KW-0963">Cytoplasm</keyword>
<keyword id="KW-0408">Iron</keyword>
<keyword id="KW-0411">Iron-sulfur</keyword>
<keyword id="KW-0460">Magnesium</keyword>
<keyword id="KW-0479">Metal-binding</keyword>
<keyword id="KW-0547">Nucleotide-binding</keyword>
<keyword id="KW-0694">RNA-binding</keyword>
<keyword id="KW-0808">Transferase</keyword>
<keyword id="KW-0819">tRNA processing</keyword>
<keyword id="KW-0820">tRNA-binding</keyword>
<proteinExistence type="inferred from homology"/>
<comment type="function">
    <text evidence="1">Catalyzes the ATP-dependent 2-thiolation of cytidine in position 32 of tRNA, to form 2-thiocytidine (s(2)C32). The sulfur atoms are provided by the cysteine/cysteine desulfurase (IscS) system.</text>
</comment>
<comment type="catalytic activity">
    <reaction evidence="1">
        <text>cytidine(32) in tRNA + S-sulfanyl-L-cysteinyl-[cysteine desulfurase] + AH2 + ATP = 2-thiocytidine(32) in tRNA + L-cysteinyl-[cysteine desulfurase] + A + AMP + diphosphate + H(+)</text>
        <dbReference type="Rhea" id="RHEA:57048"/>
        <dbReference type="Rhea" id="RHEA-COMP:10288"/>
        <dbReference type="Rhea" id="RHEA-COMP:12157"/>
        <dbReference type="Rhea" id="RHEA-COMP:12158"/>
        <dbReference type="Rhea" id="RHEA-COMP:14821"/>
        <dbReference type="ChEBI" id="CHEBI:13193"/>
        <dbReference type="ChEBI" id="CHEBI:15378"/>
        <dbReference type="ChEBI" id="CHEBI:17499"/>
        <dbReference type="ChEBI" id="CHEBI:29950"/>
        <dbReference type="ChEBI" id="CHEBI:30616"/>
        <dbReference type="ChEBI" id="CHEBI:33019"/>
        <dbReference type="ChEBI" id="CHEBI:61963"/>
        <dbReference type="ChEBI" id="CHEBI:82748"/>
        <dbReference type="ChEBI" id="CHEBI:141453"/>
        <dbReference type="ChEBI" id="CHEBI:456215"/>
    </reaction>
    <physiologicalReaction direction="left-to-right" evidence="1">
        <dbReference type="Rhea" id="RHEA:57049"/>
    </physiologicalReaction>
</comment>
<comment type="cofactor">
    <cofactor evidence="1">
        <name>Mg(2+)</name>
        <dbReference type="ChEBI" id="CHEBI:18420"/>
    </cofactor>
</comment>
<comment type="cofactor">
    <cofactor evidence="1">
        <name>[4Fe-4S] cluster</name>
        <dbReference type="ChEBI" id="CHEBI:49883"/>
    </cofactor>
    <text evidence="1">Binds 1 [4Fe-4S] cluster per subunit. The cluster is chelated by three Cys residues, the fourth Fe has a free coordination site that may bind a sulfur atom transferred from the persulfide of IscS.</text>
</comment>
<comment type="pathway">
    <text evidence="1">tRNA modification.</text>
</comment>
<comment type="subunit">
    <text evidence="1">Homodimer.</text>
</comment>
<comment type="subcellular location">
    <subcellularLocation>
        <location evidence="1">Cytoplasm</location>
    </subcellularLocation>
</comment>
<comment type="miscellaneous">
    <text evidence="1">The thiolation reaction likely consists of two steps: a first activation step by ATP to form an adenylated intermediate of the target base of tRNA, and a second nucleophilic substitution step of the sulfur (S) atom supplied by the hydrosulfide attached to the Fe-S cluster.</text>
</comment>
<comment type="similarity">
    <text evidence="1">Belongs to the TtcA family.</text>
</comment>
<sequence>MNAFDADITEHADSSGCHPLFRDVPATVEFNKLRKRLLRLTRQAIEDFAMVKPGDRWMVCLSGGKDSYGLLALLLDLKWRGLLPVELLAVNLDQGQPNFPKHILPDFLTRYGIEHRIEYQDTYSIVTDKLPETSTYCSLCSRLRRGNLYRIAREEGCSAIVLGHHREDILETFFMNLFHGGRLAAMPPKLLNDEGDLMVFRPLAYAAEDDLEKFANAMQFPIIPCDLCGSQDGLQRNAMKAMLIDIEKRMPGRKDTMIRALTNVRPSHLLDRKLFDFAGLMANGEKGSDDALW</sequence>
<protein>
    <recommendedName>
        <fullName evidence="1">tRNA-cytidine(32) 2-sulfurtransferase</fullName>
        <ecNumber evidence="1">2.8.1.-</ecNumber>
    </recommendedName>
    <alternativeName>
        <fullName evidence="1">Two-thiocytidine biosynthesis protein A</fullName>
    </alternativeName>
    <alternativeName>
        <fullName evidence="1">tRNA 2-thiocytidine biosynthesis protein TtcA</fullName>
    </alternativeName>
</protein>
<name>TTCA_BRUAB</name>
<organism>
    <name type="scientific">Brucella abortus biovar 1 (strain 9-941)</name>
    <dbReference type="NCBI Taxonomy" id="262698"/>
    <lineage>
        <taxon>Bacteria</taxon>
        <taxon>Pseudomonadati</taxon>
        <taxon>Pseudomonadota</taxon>
        <taxon>Alphaproteobacteria</taxon>
        <taxon>Hyphomicrobiales</taxon>
        <taxon>Brucellaceae</taxon>
        <taxon>Brucella/Ochrobactrum group</taxon>
        <taxon>Brucella</taxon>
    </lineage>
</organism>
<accession>Q57DS4</accession>